<gene>
    <name type="primary">sodA</name>
    <name type="synonym">sodB</name>
    <name type="ordered locus">MSMEG_6427</name>
    <name type="ordered locus">MSMEI_6260</name>
</gene>
<name>SODM_MYCS2</name>
<proteinExistence type="evidence at protein level"/>
<protein>
    <recommendedName>
        <fullName>Superoxide dismutase [Mn]</fullName>
        <ecNumber>1.15.1.1</ecNumber>
    </recommendedName>
</protein>
<sequence>MAEYTLPDLDYDYGALEPHISGQINELHHSKHHATYVKGVNDAIAKLEEARANGDHAAIFLNEKNLAFHLGGHINHSIWWKNLSPNGGDKPTGELAAAIDDQFGSFDKFQAQFTAAANGLQGSGWAVLGYDSLGGRLLTFQLYDQQANVPLGIIPLLQVDMWEHAFYLQYKNVKADYVKAFWNVVNWDDVQNRFAAATSKTSGLIFG</sequence>
<comment type="function">
    <text evidence="1">Destroys superoxide anion radicals which are normally produced within the cells and which are toxic to biological systems.</text>
</comment>
<comment type="catalytic activity">
    <reaction>
        <text>2 superoxide + 2 H(+) = H2O2 + O2</text>
        <dbReference type="Rhea" id="RHEA:20696"/>
        <dbReference type="ChEBI" id="CHEBI:15378"/>
        <dbReference type="ChEBI" id="CHEBI:15379"/>
        <dbReference type="ChEBI" id="CHEBI:16240"/>
        <dbReference type="ChEBI" id="CHEBI:18421"/>
        <dbReference type="EC" id="1.15.1.1"/>
    </reaction>
</comment>
<comment type="cofactor">
    <cofactor evidence="1">
        <name>Mn(2+)</name>
        <dbReference type="ChEBI" id="CHEBI:29035"/>
    </cofactor>
    <text evidence="1">Binds 1 Mn(2+) ion per subunit.</text>
</comment>
<comment type="subunit">
    <text evidence="1">Homotetramer.</text>
</comment>
<comment type="PTM">
    <text evidence="2 3">Pupylated by the prokaryotic ubiquitin-like protein Pup, which leads to its degradation by the proteasome.</text>
</comment>
<comment type="miscellaneous">
    <text>Was identified as a natural substrate of the M.smegmatis proteasome.</text>
</comment>
<comment type="similarity">
    <text evidence="4">Belongs to the iron/manganese superoxide dismutase family.</text>
</comment>
<organism>
    <name type="scientific">Mycolicibacterium smegmatis (strain ATCC 700084 / mc(2)155)</name>
    <name type="common">Mycobacterium smegmatis</name>
    <dbReference type="NCBI Taxonomy" id="246196"/>
    <lineage>
        <taxon>Bacteria</taxon>
        <taxon>Bacillati</taxon>
        <taxon>Actinomycetota</taxon>
        <taxon>Actinomycetes</taxon>
        <taxon>Mycobacteriales</taxon>
        <taxon>Mycobacteriaceae</taxon>
        <taxon>Mycolicibacterium</taxon>
    </lineage>
</organism>
<accession>A0R652</accession>
<accession>I7GFS1</accession>
<evidence type="ECO:0000250" key="1"/>
<evidence type="ECO:0000269" key="2">
    <source>
    </source>
</evidence>
<evidence type="ECO:0000269" key="3">
    <source>
    </source>
</evidence>
<evidence type="ECO:0000305" key="4"/>
<feature type="chain" id="PRO_0000383478" description="Superoxide dismutase [Mn]">
    <location>
        <begin position="1"/>
        <end position="207"/>
    </location>
</feature>
<feature type="cross-link" description="Isoglutamyl lysine isopeptide (Lys-Gln) (interchain with Q-Cter in protein Pup)" evidence="3">
    <location>
        <position position="38"/>
    </location>
</feature>
<feature type="cross-link" description="Isoglutamyl lysine isopeptide (Lys-Gln) (interchain with Q-Cter in protein Pup)" evidence="3">
    <location>
        <position position="90"/>
    </location>
</feature>
<reference key="1">
    <citation type="submission" date="2006-10" db="EMBL/GenBank/DDBJ databases">
        <authorList>
            <person name="Fleischmann R.D."/>
            <person name="Dodson R.J."/>
            <person name="Haft D.H."/>
            <person name="Merkel J.S."/>
            <person name="Nelson W.C."/>
            <person name="Fraser C.M."/>
        </authorList>
    </citation>
    <scope>NUCLEOTIDE SEQUENCE [LARGE SCALE GENOMIC DNA]</scope>
    <source>
        <strain>ATCC 700084 / mc(2)155</strain>
    </source>
</reference>
<reference key="2">
    <citation type="journal article" date="2007" name="Genome Biol.">
        <title>Interrupted coding sequences in Mycobacterium smegmatis: authentic mutations or sequencing errors?</title>
        <authorList>
            <person name="Deshayes C."/>
            <person name="Perrodou E."/>
            <person name="Gallien S."/>
            <person name="Euphrasie D."/>
            <person name="Schaeffer C."/>
            <person name="Van-Dorsselaer A."/>
            <person name="Poch O."/>
            <person name="Lecompte O."/>
            <person name="Reyrat J.-M."/>
        </authorList>
    </citation>
    <scope>NUCLEOTIDE SEQUENCE [LARGE SCALE GENOMIC DNA]</scope>
    <source>
        <strain>ATCC 700084 / mc(2)155</strain>
    </source>
</reference>
<reference key="3">
    <citation type="journal article" date="2009" name="Genome Res.">
        <title>Ortho-proteogenomics: multiple proteomes investigation through orthology and a new MS-based protocol.</title>
        <authorList>
            <person name="Gallien S."/>
            <person name="Perrodou E."/>
            <person name="Carapito C."/>
            <person name="Deshayes C."/>
            <person name="Reyrat J.-M."/>
            <person name="Van Dorsselaer A."/>
            <person name="Poch O."/>
            <person name="Schaeffer C."/>
            <person name="Lecompte O."/>
        </authorList>
    </citation>
    <scope>NUCLEOTIDE SEQUENCE [LARGE SCALE GENOMIC DNA]</scope>
    <source>
        <strain>ATCC 700084 / mc(2)155</strain>
    </source>
</reference>
<reference key="4">
    <citation type="journal article" date="2009" name="J. Biol. Chem.">
        <title>Proteasomal protein degradation in mycobacteria is dependent upon a prokaryotic ubiquitin-like protein.</title>
        <authorList>
            <person name="Burns K.E."/>
            <person name="Liu W.-T."/>
            <person name="Boshoff H.I.M."/>
            <person name="Dorrestein P.C."/>
            <person name="Barry C.E. III"/>
        </authorList>
    </citation>
    <scope>PROTEASOME SUBSTRATE</scope>
    <scope>PUPYLATION</scope>
    <scope>IDENTIFICATION BY MASS SPECTROMETRY</scope>
</reference>
<reference key="5">
    <citation type="journal article" date="2010" name="Mol. Biosyst.">
        <title>Expansion of the mycobacterial 'PUPylome'.</title>
        <authorList>
            <person name="Watrous J."/>
            <person name="Burns K."/>
            <person name="Liu W.T."/>
            <person name="Patel A."/>
            <person name="Hook V."/>
            <person name="Bafna V."/>
            <person name="Barry C.E. III"/>
            <person name="Bark S."/>
            <person name="Dorrestein P.C."/>
        </authorList>
    </citation>
    <scope>PUPYLATION AT LYS-38 AND LYS-90</scope>
    <scope>IDENTIFICATION BY MASS SPECTROMETRY</scope>
</reference>
<keyword id="KW-1017">Isopeptide bond</keyword>
<keyword id="KW-0464">Manganese</keyword>
<keyword id="KW-0479">Metal-binding</keyword>
<keyword id="KW-0560">Oxidoreductase</keyword>
<keyword id="KW-1185">Reference proteome</keyword>
<keyword id="KW-0832">Ubl conjugation</keyword>
<dbReference type="EC" id="1.15.1.1"/>
<dbReference type="EMBL" id="CP000480">
    <property type="protein sequence ID" value="ABK71950.1"/>
    <property type="molecule type" value="Genomic_DNA"/>
</dbReference>
<dbReference type="EMBL" id="CP001663">
    <property type="protein sequence ID" value="AFP42686.1"/>
    <property type="molecule type" value="Genomic_DNA"/>
</dbReference>
<dbReference type="RefSeq" id="WP_011731275.1">
    <property type="nucleotide sequence ID" value="NZ_SIJM01000013.1"/>
</dbReference>
<dbReference type="RefSeq" id="YP_890640.1">
    <property type="nucleotide sequence ID" value="NC_008596.1"/>
</dbReference>
<dbReference type="SMR" id="A0R652"/>
<dbReference type="STRING" id="246196.MSMEG_6427"/>
<dbReference type="PaxDb" id="246196-MSMEI_6260"/>
<dbReference type="KEGG" id="msb:LJ00_31775"/>
<dbReference type="KEGG" id="msg:MSMEI_6260"/>
<dbReference type="KEGG" id="msm:MSMEG_6427"/>
<dbReference type="PATRIC" id="fig|246196.19.peg.6254"/>
<dbReference type="eggNOG" id="COG0605">
    <property type="taxonomic scope" value="Bacteria"/>
</dbReference>
<dbReference type="OrthoDB" id="9803125at2"/>
<dbReference type="Proteomes" id="UP000000757">
    <property type="component" value="Chromosome"/>
</dbReference>
<dbReference type="Proteomes" id="UP000006158">
    <property type="component" value="Chromosome"/>
</dbReference>
<dbReference type="GO" id="GO:0046872">
    <property type="term" value="F:metal ion binding"/>
    <property type="evidence" value="ECO:0007669"/>
    <property type="project" value="UniProtKB-KW"/>
</dbReference>
<dbReference type="GO" id="GO:0004784">
    <property type="term" value="F:superoxide dismutase activity"/>
    <property type="evidence" value="ECO:0007669"/>
    <property type="project" value="UniProtKB-EC"/>
</dbReference>
<dbReference type="FunFam" id="1.10.287.990:FF:000001">
    <property type="entry name" value="Superoxide dismutase"/>
    <property type="match status" value="1"/>
</dbReference>
<dbReference type="FunFam" id="3.55.40.20:FF:000004">
    <property type="entry name" value="Superoxide dismutase [Fe]"/>
    <property type="match status" value="1"/>
</dbReference>
<dbReference type="Gene3D" id="1.10.287.990">
    <property type="entry name" value="Fe,Mn superoxide dismutase (SOD) domain"/>
    <property type="match status" value="1"/>
</dbReference>
<dbReference type="Gene3D" id="3.55.40.20">
    <property type="entry name" value="Iron/manganese superoxide dismutase, C-terminal domain"/>
    <property type="match status" value="1"/>
</dbReference>
<dbReference type="InterPro" id="IPR050265">
    <property type="entry name" value="Fe/Mn_Superoxide_Dismutase"/>
</dbReference>
<dbReference type="InterPro" id="IPR001189">
    <property type="entry name" value="Mn/Fe_SOD"/>
</dbReference>
<dbReference type="InterPro" id="IPR019833">
    <property type="entry name" value="Mn/Fe_SOD_BS"/>
</dbReference>
<dbReference type="InterPro" id="IPR019832">
    <property type="entry name" value="Mn/Fe_SOD_C"/>
</dbReference>
<dbReference type="InterPro" id="IPR019831">
    <property type="entry name" value="Mn/Fe_SOD_N"/>
</dbReference>
<dbReference type="InterPro" id="IPR036324">
    <property type="entry name" value="Mn/Fe_SOD_N_sf"/>
</dbReference>
<dbReference type="InterPro" id="IPR036314">
    <property type="entry name" value="SOD_C_sf"/>
</dbReference>
<dbReference type="PANTHER" id="PTHR11404">
    <property type="entry name" value="SUPEROXIDE DISMUTASE 2"/>
    <property type="match status" value="1"/>
</dbReference>
<dbReference type="PANTHER" id="PTHR11404:SF6">
    <property type="entry name" value="SUPEROXIDE DISMUTASE [MN], MITOCHONDRIAL"/>
    <property type="match status" value="1"/>
</dbReference>
<dbReference type="Pfam" id="PF02777">
    <property type="entry name" value="Sod_Fe_C"/>
    <property type="match status" value="1"/>
</dbReference>
<dbReference type="Pfam" id="PF00081">
    <property type="entry name" value="Sod_Fe_N"/>
    <property type="match status" value="1"/>
</dbReference>
<dbReference type="PIRSF" id="PIRSF000349">
    <property type="entry name" value="SODismutase"/>
    <property type="match status" value="1"/>
</dbReference>
<dbReference type="PRINTS" id="PR01703">
    <property type="entry name" value="MNSODISMTASE"/>
</dbReference>
<dbReference type="SUPFAM" id="SSF54719">
    <property type="entry name" value="Fe,Mn superoxide dismutase (SOD), C-terminal domain"/>
    <property type="match status" value="1"/>
</dbReference>
<dbReference type="SUPFAM" id="SSF46609">
    <property type="entry name" value="Fe,Mn superoxide dismutase (SOD), N-terminal domain"/>
    <property type="match status" value="1"/>
</dbReference>
<dbReference type="PROSITE" id="PS00088">
    <property type="entry name" value="SOD_MN"/>
    <property type="match status" value="1"/>
</dbReference>